<gene>
    <name evidence="1" type="primary">nusB</name>
    <name type="ordered locus">BCB4264_A4292</name>
</gene>
<proteinExistence type="inferred from homology"/>
<name>NUSB_BACC4</name>
<accession>B7HB53</accession>
<sequence length="130" mass="15104">MKRRTARERAMQALYQMDITGELEPKVAVENTLDEGEETNEFLESLVVGFVENKEAIDEAIRQNLKKWKLERISIVDRSILRVAVYEMKYMEEIPHNVTINEAIEIAKTFGDEESRRFINGVLSNIKDTL</sequence>
<dbReference type="EMBL" id="CP001176">
    <property type="protein sequence ID" value="ACK61263.1"/>
    <property type="molecule type" value="Genomic_DNA"/>
</dbReference>
<dbReference type="RefSeq" id="WP_000830247.1">
    <property type="nucleotide sequence ID" value="NZ_VEHB01000002.1"/>
</dbReference>
<dbReference type="SMR" id="B7HB53"/>
<dbReference type="GeneID" id="72450865"/>
<dbReference type="KEGG" id="bcb:BCB4264_A4292"/>
<dbReference type="HOGENOM" id="CLU_087843_3_3_9"/>
<dbReference type="Proteomes" id="UP000007096">
    <property type="component" value="Chromosome"/>
</dbReference>
<dbReference type="GO" id="GO:0005829">
    <property type="term" value="C:cytosol"/>
    <property type="evidence" value="ECO:0007669"/>
    <property type="project" value="TreeGrafter"/>
</dbReference>
<dbReference type="GO" id="GO:0003723">
    <property type="term" value="F:RNA binding"/>
    <property type="evidence" value="ECO:0007669"/>
    <property type="project" value="UniProtKB-UniRule"/>
</dbReference>
<dbReference type="GO" id="GO:0006353">
    <property type="term" value="P:DNA-templated transcription termination"/>
    <property type="evidence" value="ECO:0007669"/>
    <property type="project" value="UniProtKB-UniRule"/>
</dbReference>
<dbReference type="GO" id="GO:0031564">
    <property type="term" value="P:transcription antitermination"/>
    <property type="evidence" value="ECO:0007669"/>
    <property type="project" value="UniProtKB-KW"/>
</dbReference>
<dbReference type="CDD" id="cd00619">
    <property type="entry name" value="Terminator_NusB"/>
    <property type="match status" value="1"/>
</dbReference>
<dbReference type="FunFam" id="1.10.940.10:FF:000003">
    <property type="entry name" value="Transcription antitermination factor NusB"/>
    <property type="match status" value="1"/>
</dbReference>
<dbReference type="Gene3D" id="1.10.940.10">
    <property type="entry name" value="NusB-like"/>
    <property type="match status" value="1"/>
</dbReference>
<dbReference type="HAMAP" id="MF_00073">
    <property type="entry name" value="NusB"/>
    <property type="match status" value="1"/>
</dbReference>
<dbReference type="InterPro" id="IPR035926">
    <property type="entry name" value="NusB-like_sf"/>
</dbReference>
<dbReference type="InterPro" id="IPR011605">
    <property type="entry name" value="NusB_fam"/>
</dbReference>
<dbReference type="InterPro" id="IPR006027">
    <property type="entry name" value="NusB_RsmB_TIM44"/>
</dbReference>
<dbReference type="NCBIfam" id="TIGR01951">
    <property type="entry name" value="nusB"/>
    <property type="match status" value="1"/>
</dbReference>
<dbReference type="NCBIfam" id="NF001223">
    <property type="entry name" value="PRK00202.1-1"/>
    <property type="match status" value="1"/>
</dbReference>
<dbReference type="PANTHER" id="PTHR11078:SF3">
    <property type="entry name" value="ANTITERMINATION NUSB DOMAIN-CONTAINING PROTEIN"/>
    <property type="match status" value="1"/>
</dbReference>
<dbReference type="PANTHER" id="PTHR11078">
    <property type="entry name" value="N UTILIZATION SUBSTANCE PROTEIN B-RELATED"/>
    <property type="match status" value="1"/>
</dbReference>
<dbReference type="Pfam" id="PF01029">
    <property type="entry name" value="NusB"/>
    <property type="match status" value="1"/>
</dbReference>
<dbReference type="SUPFAM" id="SSF48013">
    <property type="entry name" value="NusB-like"/>
    <property type="match status" value="1"/>
</dbReference>
<keyword id="KW-0694">RNA-binding</keyword>
<keyword id="KW-0804">Transcription</keyword>
<keyword id="KW-0889">Transcription antitermination</keyword>
<keyword id="KW-0805">Transcription regulation</keyword>
<comment type="function">
    <text evidence="1">Involved in transcription antitermination. Required for transcription of ribosomal RNA (rRNA) genes. Binds specifically to the boxA antiterminator sequence of the ribosomal RNA (rrn) operons.</text>
</comment>
<comment type="similarity">
    <text evidence="1">Belongs to the NusB family.</text>
</comment>
<protein>
    <recommendedName>
        <fullName evidence="1">Transcription antitermination protein NusB</fullName>
    </recommendedName>
    <alternativeName>
        <fullName evidence="1">Antitermination factor NusB</fullName>
    </alternativeName>
</protein>
<feature type="chain" id="PRO_1000117044" description="Transcription antitermination protein NusB">
    <location>
        <begin position="1"/>
        <end position="130"/>
    </location>
</feature>
<evidence type="ECO:0000255" key="1">
    <source>
        <dbReference type="HAMAP-Rule" id="MF_00073"/>
    </source>
</evidence>
<organism>
    <name type="scientific">Bacillus cereus (strain B4264)</name>
    <dbReference type="NCBI Taxonomy" id="405532"/>
    <lineage>
        <taxon>Bacteria</taxon>
        <taxon>Bacillati</taxon>
        <taxon>Bacillota</taxon>
        <taxon>Bacilli</taxon>
        <taxon>Bacillales</taxon>
        <taxon>Bacillaceae</taxon>
        <taxon>Bacillus</taxon>
        <taxon>Bacillus cereus group</taxon>
    </lineage>
</organism>
<reference key="1">
    <citation type="submission" date="2008-10" db="EMBL/GenBank/DDBJ databases">
        <title>Genome sequence of Bacillus cereus B4264.</title>
        <authorList>
            <person name="Dodson R.J."/>
            <person name="Durkin A.S."/>
            <person name="Rosovitz M.J."/>
            <person name="Rasko D.A."/>
            <person name="Hoffmaster A."/>
            <person name="Ravel J."/>
            <person name="Sutton G."/>
        </authorList>
    </citation>
    <scope>NUCLEOTIDE SEQUENCE [LARGE SCALE GENOMIC DNA]</scope>
    <source>
        <strain>B4264</strain>
    </source>
</reference>